<comment type="function">
    <text evidence="1">Mediates the transbilayer movement of Und-PP-GlcNAc-ManNAcA-Fuc4NAc (lipid III) from the inner to the outer leaflet of the cytoplasmic membrane during the assembly of enterobacterial common antigen (ECA).</text>
</comment>
<comment type="pathway">
    <text evidence="1">Bacterial outer membrane biogenesis; enterobacterial common antigen biosynthesis.</text>
</comment>
<comment type="subunit">
    <text evidence="1">Probably part of a complex composed of WzxE, WzyE and WzzE.</text>
</comment>
<comment type="subcellular location">
    <subcellularLocation>
        <location evidence="1">Cell inner membrane</location>
        <topology evidence="1">Multi-pass membrane protein</topology>
    </subcellularLocation>
</comment>
<comment type="similarity">
    <text evidence="1">Belongs to the polysaccharide transport (PST) (TC 2.A.66.2) family.</text>
</comment>
<evidence type="ECO:0000255" key="1">
    <source>
        <dbReference type="HAMAP-Rule" id="MF_02024"/>
    </source>
</evidence>
<feature type="chain" id="PRO_0000065990" description="Lipid III flippase">
    <location>
        <begin position="1"/>
        <end position="416"/>
    </location>
</feature>
<feature type="transmembrane region" description="Helical" evidence="1">
    <location>
        <begin position="18"/>
        <end position="38"/>
    </location>
</feature>
<feature type="transmembrane region" description="Helical" evidence="1">
    <location>
        <begin position="46"/>
        <end position="66"/>
    </location>
</feature>
<feature type="transmembrane region" description="Helical" evidence="1">
    <location>
        <begin position="85"/>
        <end position="105"/>
    </location>
</feature>
<feature type="transmembrane region" description="Helical" evidence="1">
    <location>
        <begin position="122"/>
        <end position="142"/>
    </location>
</feature>
<feature type="transmembrane region" description="Helical" evidence="1">
    <location>
        <begin position="145"/>
        <end position="165"/>
    </location>
</feature>
<feature type="transmembrane region" description="Helical" evidence="1">
    <location>
        <begin position="175"/>
        <end position="195"/>
    </location>
</feature>
<feature type="transmembrane region" description="Helical" evidence="1">
    <location>
        <begin position="217"/>
        <end position="237"/>
    </location>
</feature>
<feature type="transmembrane region" description="Helical" evidence="1">
    <location>
        <begin position="260"/>
        <end position="280"/>
    </location>
</feature>
<feature type="transmembrane region" description="Helical" evidence="1">
    <location>
        <begin position="303"/>
        <end position="323"/>
    </location>
</feature>
<feature type="transmembrane region" description="Helical" evidence="1">
    <location>
        <begin position="335"/>
        <end position="355"/>
    </location>
</feature>
<feature type="transmembrane region" description="Helical" evidence="1">
    <location>
        <begin position="371"/>
        <end position="391"/>
    </location>
</feature>
<feature type="transmembrane region" description="Helical" evidence="1">
    <location>
        <begin position="392"/>
        <end position="412"/>
    </location>
</feature>
<keyword id="KW-0997">Cell inner membrane</keyword>
<keyword id="KW-1003">Cell membrane</keyword>
<keyword id="KW-0472">Membrane</keyword>
<keyword id="KW-1185">Reference proteome</keyword>
<keyword id="KW-0812">Transmembrane</keyword>
<keyword id="KW-1133">Transmembrane helix</keyword>
<keyword id="KW-0813">Transport</keyword>
<dbReference type="EMBL" id="AE005674">
    <property type="protein sequence ID" value="AAN45303.1"/>
    <property type="molecule type" value="Genomic_DNA"/>
</dbReference>
<dbReference type="EMBL" id="AE014073">
    <property type="protein sequence ID" value="AAP18895.1"/>
    <property type="molecule type" value="Genomic_DNA"/>
</dbReference>
<dbReference type="RefSeq" id="NP_709596.1">
    <property type="nucleotide sequence ID" value="NC_004337.2"/>
</dbReference>
<dbReference type="RefSeq" id="WP_000050265.1">
    <property type="nucleotide sequence ID" value="NZ_WPGW01000028.1"/>
</dbReference>
<dbReference type="SMR" id="P0AAA8"/>
<dbReference type="STRING" id="198214.SF3866"/>
<dbReference type="PaxDb" id="198214-SF3866"/>
<dbReference type="GeneID" id="1025971"/>
<dbReference type="GeneID" id="93778152"/>
<dbReference type="KEGG" id="sfl:SF3866"/>
<dbReference type="KEGG" id="sfx:S3894"/>
<dbReference type="PATRIC" id="fig|198214.7.peg.4556"/>
<dbReference type="HOGENOM" id="CLU_042154_0_0_6"/>
<dbReference type="UniPathway" id="UPA00566"/>
<dbReference type="Proteomes" id="UP000001006">
    <property type="component" value="Chromosome"/>
</dbReference>
<dbReference type="Proteomes" id="UP000002673">
    <property type="component" value="Chromosome"/>
</dbReference>
<dbReference type="GO" id="GO:0005886">
    <property type="term" value="C:plasma membrane"/>
    <property type="evidence" value="ECO:0007669"/>
    <property type="project" value="UniProtKB-SubCell"/>
</dbReference>
<dbReference type="GO" id="GO:0009246">
    <property type="term" value="P:enterobacterial common antigen biosynthetic process"/>
    <property type="evidence" value="ECO:0007669"/>
    <property type="project" value="UniProtKB-UniRule"/>
</dbReference>
<dbReference type="CDD" id="cd13125">
    <property type="entry name" value="MATE_like_10"/>
    <property type="match status" value="1"/>
</dbReference>
<dbReference type="HAMAP" id="MF_02024">
    <property type="entry name" value="WzxE"/>
    <property type="match status" value="1"/>
</dbReference>
<dbReference type="InterPro" id="IPR050833">
    <property type="entry name" value="Poly_Biosynth_Transport"/>
</dbReference>
<dbReference type="InterPro" id="IPR002797">
    <property type="entry name" value="Polysacc_synth"/>
</dbReference>
<dbReference type="InterPro" id="IPR044550">
    <property type="entry name" value="WzxE"/>
</dbReference>
<dbReference type="InterPro" id="IPR032896">
    <property type="entry name" value="WzxE_Proteobacteria"/>
</dbReference>
<dbReference type="NCBIfam" id="NF011679">
    <property type="entry name" value="PRK15099.1"/>
    <property type="match status" value="1"/>
</dbReference>
<dbReference type="PANTHER" id="PTHR30250:SF30">
    <property type="entry name" value="LIPID III FLIPPASE"/>
    <property type="match status" value="1"/>
</dbReference>
<dbReference type="PANTHER" id="PTHR30250">
    <property type="entry name" value="PST FAMILY PREDICTED COLANIC ACID TRANSPORTER"/>
    <property type="match status" value="1"/>
</dbReference>
<dbReference type="Pfam" id="PF01943">
    <property type="entry name" value="Polysacc_synt"/>
    <property type="match status" value="1"/>
</dbReference>
<gene>
    <name evidence="1" type="primary">wzxE</name>
    <name type="synonym">wzx</name>
    <name type="ordered locus">SF3866</name>
    <name type="ordered locus">S3894</name>
</gene>
<accession>P0AAA8</accession>
<accession>P27834</accession>
<name>WZXE_SHIFL</name>
<sequence>MSLAKASLWTAASTLVKIGAGLLVGKLLAVSFGPAGLGLAANFRQLITVLGVLAGAGIFNGVTKYVAQYHDNPQQLRRVVGTSSAMVLGFSTLMALVFVLAAAPISQGLFGNTDYQGLVRLVALVQMGIAWGNLLLALMKGFRDAAGNALSLIVGSLIGVLAYYVSYRLGGYEGALLGLALIPALVVIPAAIMLIKRGVIPLSYLKPSWDNGLAGQLSKFTLMALITSVTLPVAYIMMRKLLAAQYSWDEVGIWQGVSSISDAYLQFITASFSVYLLPTLSRLTEKRDITREVVKSLKFVLPAVAAASFTVWLLRDFAIWLLLSNKFTAMRDLFAWQLVGDVLKVGAYVFGYLVIAKASLRFYILAEVSQFTLLMVFAHWLIPAHGALGAAQAYMATYIVYFSLCCGVFLLWRRRA</sequence>
<proteinExistence type="inferred from homology"/>
<organism>
    <name type="scientific">Shigella flexneri</name>
    <dbReference type="NCBI Taxonomy" id="623"/>
    <lineage>
        <taxon>Bacteria</taxon>
        <taxon>Pseudomonadati</taxon>
        <taxon>Pseudomonadota</taxon>
        <taxon>Gammaproteobacteria</taxon>
        <taxon>Enterobacterales</taxon>
        <taxon>Enterobacteriaceae</taxon>
        <taxon>Shigella</taxon>
    </lineage>
</organism>
<protein>
    <recommendedName>
        <fullName evidence="1">Lipid III flippase</fullName>
    </recommendedName>
</protein>
<reference key="1">
    <citation type="journal article" date="2002" name="Nucleic Acids Res.">
        <title>Genome sequence of Shigella flexneri 2a: insights into pathogenicity through comparison with genomes of Escherichia coli K12 and O157.</title>
        <authorList>
            <person name="Jin Q."/>
            <person name="Yuan Z."/>
            <person name="Xu J."/>
            <person name="Wang Y."/>
            <person name="Shen Y."/>
            <person name="Lu W."/>
            <person name="Wang J."/>
            <person name="Liu H."/>
            <person name="Yang J."/>
            <person name="Yang F."/>
            <person name="Zhang X."/>
            <person name="Zhang J."/>
            <person name="Yang G."/>
            <person name="Wu H."/>
            <person name="Qu D."/>
            <person name="Dong J."/>
            <person name="Sun L."/>
            <person name="Xue Y."/>
            <person name="Zhao A."/>
            <person name="Gao Y."/>
            <person name="Zhu J."/>
            <person name="Kan B."/>
            <person name="Ding K."/>
            <person name="Chen S."/>
            <person name="Cheng H."/>
            <person name="Yao Z."/>
            <person name="He B."/>
            <person name="Chen R."/>
            <person name="Ma D."/>
            <person name="Qiang B."/>
            <person name="Wen Y."/>
            <person name="Hou Y."/>
            <person name="Yu J."/>
        </authorList>
    </citation>
    <scope>NUCLEOTIDE SEQUENCE [LARGE SCALE GENOMIC DNA]</scope>
    <source>
        <strain>301 / Serotype 2a</strain>
    </source>
</reference>
<reference key="2">
    <citation type="journal article" date="2003" name="Infect. Immun.">
        <title>Complete genome sequence and comparative genomics of Shigella flexneri serotype 2a strain 2457T.</title>
        <authorList>
            <person name="Wei J."/>
            <person name="Goldberg M.B."/>
            <person name="Burland V."/>
            <person name="Venkatesan M.M."/>
            <person name="Deng W."/>
            <person name="Fournier G."/>
            <person name="Mayhew G.F."/>
            <person name="Plunkett G. III"/>
            <person name="Rose D.J."/>
            <person name="Darling A."/>
            <person name="Mau B."/>
            <person name="Perna N.T."/>
            <person name="Payne S.M."/>
            <person name="Runyen-Janecky L.J."/>
            <person name="Zhou S."/>
            <person name="Schwartz D.C."/>
            <person name="Blattner F.R."/>
        </authorList>
    </citation>
    <scope>NUCLEOTIDE SEQUENCE [LARGE SCALE GENOMIC DNA]</scope>
    <source>
        <strain>ATCC 700930 / 2457T / Serotype 2a</strain>
    </source>
</reference>